<organism>
    <name type="scientific">Bos taurus</name>
    <name type="common">Bovine</name>
    <dbReference type="NCBI Taxonomy" id="9913"/>
    <lineage>
        <taxon>Eukaryota</taxon>
        <taxon>Metazoa</taxon>
        <taxon>Chordata</taxon>
        <taxon>Craniata</taxon>
        <taxon>Vertebrata</taxon>
        <taxon>Euteleostomi</taxon>
        <taxon>Mammalia</taxon>
        <taxon>Eutheria</taxon>
        <taxon>Laurasiatheria</taxon>
        <taxon>Artiodactyla</taxon>
        <taxon>Ruminantia</taxon>
        <taxon>Pecora</taxon>
        <taxon>Bovidae</taxon>
        <taxon>Bovinae</taxon>
        <taxon>Bos</taxon>
    </lineage>
</organism>
<sequence length="298" mass="33555">MDNAGKEREAVQLMAEAEKRVKASHSFLRGLFGGNTRIEEACEMYTRAANMFKMAKNWSAAGNAFCQAAKLHMQLQSKHDSATSFVDAGNAYKKADPQEAINCLNAAIDIYTDMGRFTIAAKHHITIAEIYETELVDIEKAIAHYEQSADYYKGEESNSSANKCLLKVAAYAAQLEQYQKAIEIFEQIGANTMDNPLLKYSAKDYFFKAALCHFIVDELNAKLALEKYEEMFPAFTDSRECKLLKKLLEAHEEQNSEAYTEAVKEFDSISRLDQWLTTMLLRIKKSIQGDGEGDGDLK</sequence>
<proteinExistence type="evidence at protein level"/>
<comment type="function">
    <text>Required for vesicular transport between the endoplasmic reticulum and the Golgi apparatus.</text>
</comment>
<comment type="subunit">
    <text evidence="1">Interacts with PRKCABP, and disrupts the interaction between GRIA2 and PRKCABP, leading to the internalization of GRIA2.</text>
</comment>
<comment type="subcellular location">
    <subcellularLocation>
        <location evidence="1">Membrane</location>
        <topology evidence="1">Peripheral membrane protein</topology>
    </subcellularLocation>
</comment>
<comment type="tissue specificity">
    <text>Brain.</text>
</comment>
<comment type="similarity">
    <text evidence="2">Belongs to the SNAP family.</text>
</comment>
<accession>P81126</accession>
<accession>Q29RR3</accession>
<keyword id="KW-0903">Direct protein sequencing</keyword>
<keyword id="KW-0931">ER-Golgi transport</keyword>
<keyword id="KW-0472">Membrane</keyword>
<keyword id="KW-0653">Protein transport</keyword>
<keyword id="KW-1185">Reference proteome</keyword>
<keyword id="KW-0813">Transport</keyword>
<feature type="chain" id="PRO_0000219059" description="Beta-soluble NSF attachment protein">
    <location>
        <begin position="1"/>
        <end position="298"/>
    </location>
</feature>
<protein>
    <recommendedName>
        <fullName>Beta-soluble NSF attachment protein</fullName>
        <shortName>SNAP-beta</shortName>
    </recommendedName>
    <alternativeName>
        <fullName>N-ethylmaleimide-sensitive factor attachment protein beta</fullName>
    </alternativeName>
</protein>
<gene>
    <name type="primary">NAPB</name>
    <name type="synonym">SNAPB</name>
</gene>
<evidence type="ECO:0000250" key="1"/>
<evidence type="ECO:0000305" key="2"/>
<name>SNAB_BOVIN</name>
<dbReference type="EMBL" id="BC114061">
    <property type="protein sequence ID" value="AAI14062.1"/>
    <property type="molecule type" value="mRNA"/>
</dbReference>
<dbReference type="PIR" id="S32368">
    <property type="entry name" value="S32368"/>
</dbReference>
<dbReference type="RefSeq" id="NP_001039698.1">
    <property type="nucleotide sequence ID" value="NM_001046233.2"/>
</dbReference>
<dbReference type="SMR" id="P81126"/>
<dbReference type="FunCoup" id="P81126">
    <property type="interactions" value="3399"/>
</dbReference>
<dbReference type="STRING" id="9913.ENSBTAP00000043745"/>
<dbReference type="PaxDb" id="9913-ENSBTAP00000043745"/>
<dbReference type="GeneID" id="517728"/>
<dbReference type="KEGG" id="bta:517728"/>
<dbReference type="CTD" id="63908"/>
<dbReference type="VEuPathDB" id="HostDB:ENSBTAG00000032704"/>
<dbReference type="eggNOG" id="KOG1586">
    <property type="taxonomic scope" value="Eukaryota"/>
</dbReference>
<dbReference type="HOGENOM" id="CLU_046329_0_1_1"/>
<dbReference type="InParanoid" id="P81126"/>
<dbReference type="OMA" id="EKAGNMY"/>
<dbReference type="OrthoDB" id="9984275at2759"/>
<dbReference type="TreeFam" id="TF316547"/>
<dbReference type="Reactome" id="R-BTA-204005">
    <property type="pathway name" value="COPII-mediated vesicle transport"/>
</dbReference>
<dbReference type="Reactome" id="R-BTA-6807878">
    <property type="pathway name" value="COPI-mediated anterograde transport"/>
</dbReference>
<dbReference type="Reactome" id="R-BTA-6811434">
    <property type="pathway name" value="COPI-dependent Golgi-to-ER retrograde traffic"/>
</dbReference>
<dbReference type="Reactome" id="R-BTA-6811438">
    <property type="pathway name" value="Intra-Golgi traffic"/>
</dbReference>
<dbReference type="Reactome" id="R-BTA-6811440">
    <property type="pathway name" value="Retrograde transport at the Trans-Golgi-Network"/>
</dbReference>
<dbReference type="Proteomes" id="UP000009136">
    <property type="component" value="Chromosome 13"/>
</dbReference>
<dbReference type="Bgee" id="ENSBTAG00000032704">
    <property type="expression patterns" value="Expressed in prefrontal cortex and 101 other cell types or tissues"/>
</dbReference>
<dbReference type="GO" id="GO:0045202">
    <property type="term" value="C:synapse"/>
    <property type="evidence" value="ECO:0007669"/>
    <property type="project" value="GOC"/>
</dbReference>
<dbReference type="GO" id="GO:0070044">
    <property type="term" value="C:synaptobrevin 2-SNAP-25-syntaxin-1a complex"/>
    <property type="evidence" value="ECO:0000318"/>
    <property type="project" value="GO_Central"/>
</dbReference>
<dbReference type="GO" id="GO:0005483">
    <property type="term" value="F:soluble NSF attachment protein activity"/>
    <property type="evidence" value="ECO:0000318"/>
    <property type="project" value="GO_Central"/>
</dbReference>
<dbReference type="GO" id="GO:0019905">
    <property type="term" value="F:syntaxin binding"/>
    <property type="evidence" value="ECO:0000318"/>
    <property type="project" value="GO_Central"/>
</dbReference>
<dbReference type="GO" id="GO:0006886">
    <property type="term" value="P:intracellular protein transport"/>
    <property type="evidence" value="ECO:0000318"/>
    <property type="project" value="GO_Central"/>
</dbReference>
<dbReference type="GO" id="GO:0010807">
    <property type="term" value="P:regulation of synaptic vesicle priming"/>
    <property type="evidence" value="ECO:0000318"/>
    <property type="project" value="GO_Central"/>
</dbReference>
<dbReference type="GO" id="GO:0035494">
    <property type="term" value="P:SNARE complex disassembly"/>
    <property type="evidence" value="ECO:0000318"/>
    <property type="project" value="GO_Central"/>
</dbReference>
<dbReference type="GO" id="GO:0035249">
    <property type="term" value="P:synaptic transmission, glutamatergic"/>
    <property type="evidence" value="ECO:0000318"/>
    <property type="project" value="GO_Central"/>
</dbReference>
<dbReference type="CDD" id="cd15832">
    <property type="entry name" value="SNAP"/>
    <property type="match status" value="1"/>
</dbReference>
<dbReference type="FunFam" id="1.25.40.10:FF:000028">
    <property type="entry name" value="beta-soluble NSF attachment protein-like isoform X1"/>
    <property type="match status" value="1"/>
</dbReference>
<dbReference type="Gene3D" id="1.25.40.10">
    <property type="entry name" value="Tetratricopeptide repeat domain"/>
    <property type="match status" value="1"/>
</dbReference>
<dbReference type="InterPro" id="IPR000744">
    <property type="entry name" value="NSF_attach"/>
</dbReference>
<dbReference type="InterPro" id="IPR011990">
    <property type="entry name" value="TPR-like_helical_dom_sf"/>
</dbReference>
<dbReference type="PANTHER" id="PTHR13768:SF12">
    <property type="entry name" value="BETA-SOLUBLE NSF ATTACHMENT PROTEIN"/>
    <property type="match status" value="1"/>
</dbReference>
<dbReference type="PANTHER" id="PTHR13768">
    <property type="entry name" value="SOLUBLE NSF ATTACHMENT PROTEIN SNAP"/>
    <property type="match status" value="1"/>
</dbReference>
<dbReference type="Pfam" id="PF14938">
    <property type="entry name" value="SNAP"/>
    <property type="match status" value="1"/>
</dbReference>
<dbReference type="PRINTS" id="PR00448">
    <property type="entry name" value="NSFATTACHMNT"/>
</dbReference>
<dbReference type="SUPFAM" id="SSF48452">
    <property type="entry name" value="TPR-like"/>
    <property type="match status" value="1"/>
</dbReference>
<reference key="1">
    <citation type="journal article" date="1993" name="Nature">
        <title>SNAP family of NSF attachment proteins includes a brain-specific isoform.</title>
        <authorList>
            <person name="Whiteheart S.W."/>
            <person name="Griff I.C."/>
            <person name="Brunner M."/>
            <person name="Clary D.O."/>
            <person name="Mayer T."/>
            <person name="Buhrow S.A."/>
            <person name="Rothman J.E."/>
        </authorList>
    </citation>
    <scope>NUCLEOTIDE SEQUENCE [MRNA]</scope>
    <scope>PARTIAL PROTEIN SEQUENCE</scope>
    <source>
        <tissue>Brain</tissue>
    </source>
</reference>
<reference key="2">
    <citation type="submission" date="2006-02" db="EMBL/GenBank/DDBJ databases">
        <authorList>
            <consortium name="NIH - Mammalian Gene Collection (MGC) project"/>
        </authorList>
    </citation>
    <scope>NUCLEOTIDE SEQUENCE [LARGE SCALE MRNA]</scope>
    <source>
        <strain>Hereford</strain>
        <tissue>Hypothalamus</tissue>
    </source>
</reference>